<proteinExistence type="inferred from homology"/>
<name>RPOE_STAES</name>
<gene>
    <name evidence="1" type="primary">rpoE</name>
    <name type="ordered locus">SE_1726</name>
</gene>
<evidence type="ECO:0000255" key="1">
    <source>
        <dbReference type="HAMAP-Rule" id="MF_00357"/>
    </source>
</evidence>
<evidence type="ECO:0000255" key="2">
    <source>
        <dbReference type="PROSITE-ProRule" id="PRU01261"/>
    </source>
</evidence>
<evidence type="ECO:0000256" key="3">
    <source>
        <dbReference type="SAM" id="MobiDB-lite"/>
    </source>
</evidence>
<dbReference type="EMBL" id="AE015929">
    <property type="protein sequence ID" value="AAO05325.1"/>
    <property type="molecule type" value="Genomic_DNA"/>
</dbReference>
<dbReference type="RefSeq" id="NP_765281.1">
    <property type="nucleotide sequence ID" value="NC_004461.1"/>
</dbReference>
<dbReference type="RefSeq" id="WP_002468298.1">
    <property type="nucleotide sequence ID" value="NZ_WBME01000041.1"/>
</dbReference>
<dbReference type="SMR" id="Q8CRM5"/>
<dbReference type="GeneID" id="50018175"/>
<dbReference type="KEGG" id="sep:SE_1726"/>
<dbReference type="PATRIC" id="fig|176280.10.peg.1686"/>
<dbReference type="eggNOG" id="COG3343">
    <property type="taxonomic scope" value="Bacteria"/>
</dbReference>
<dbReference type="HOGENOM" id="CLU_116648_1_0_9"/>
<dbReference type="OrthoDB" id="401223at2"/>
<dbReference type="Proteomes" id="UP000001411">
    <property type="component" value="Chromosome"/>
</dbReference>
<dbReference type="GO" id="GO:0000428">
    <property type="term" value="C:DNA-directed RNA polymerase complex"/>
    <property type="evidence" value="ECO:0007669"/>
    <property type="project" value="UniProtKB-KW"/>
</dbReference>
<dbReference type="GO" id="GO:0003899">
    <property type="term" value="F:DNA-directed RNA polymerase activity"/>
    <property type="evidence" value="ECO:0007669"/>
    <property type="project" value="UniProtKB-UniRule"/>
</dbReference>
<dbReference type="GO" id="GO:0006351">
    <property type="term" value="P:DNA-templated transcription"/>
    <property type="evidence" value="ECO:0007669"/>
    <property type="project" value="InterPro"/>
</dbReference>
<dbReference type="GO" id="GO:0006355">
    <property type="term" value="P:regulation of DNA-templated transcription"/>
    <property type="evidence" value="ECO:0007669"/>
    <property type="project" value="UniProtKB-UniRule"/>
</dbReference>
<dbReference type="Gene3D" id="1.10.10.1250">
    <property type="entry name" value="RNA polymerase, subunit delta, N-terminal domain"/>
    <property type="match status" value="1"/>
</dbReference>
<dbReference type="HAMAP" id="MF_00357">
    <property type="entry name" value="RNApol_bact_RpoE"/>
    <property type="match status" value="1"/>
</dbReference>
<dbReference type="InterPro" id="IPR007759">
    <property type="entry name" value="Asxl_HARE-HTH"/>
</dbReference>
<dbReference type="InterPro" id="IPR038087">
    <property type="entry name" value="RNAP_delta_N_dom_sf"/>
</dbReference>
<dbReference type="InterPro" id="IPR029757">
    <property type="entry name" value="RpoE"/>
</dbReference>
<dbReference type="NCBIfam" id="TIGR04567">
    <property type="entry name" value="RNAP_delt_lowGC"/>
    <property type="match status" value="1"/>
</dbReference>
<dbReference type="Pfam" id="PF05066">
    <property type="entry name" value="HARE-HTH"/>
    <property type="match status" value="1"/>
</dbReference>
<dbReference type="PROSITE" id="PS51913">
    <property type="entry name" value="HTH_HARE"/>
    <property type="match status" value="1"/>
</dbReference>
<keyword id="KW-0240">DNA-directed RNA polymerase</keyword>
<keyword id="KW-0548">Nucleotidyltransferase</keyword>
<keyword id="KW-0804">Transcription</keyword>
<keyword id="KW-0808">Transferase</keyword>
<feature type="chain" id="PRO_0000204326" description="Probable DNA-directed RNA polymerase subunit delta">
    <location>
        <begin position="1"/>
        <end position="178"/>
    </location>
</feature>
<feature type="domain" description="HTH HARE-type" evidence="2">
    <location>
        <begin position="14"/>
        <end position="81"/>
    </location>
</feature>
<feature type="region of interest" description="Disordered" evidence="3">
    <location>
        <begin position="114"/>
        <end position="178"/>
    </location>
</feature>
<feature type="compositionally biased region" description="Acidic residues" evidence="3">
    <location>
        <begin position="116"/>
        <end position="178"/>
    </location>
</feature>
<protein>
    <recommendedName>
        <fullName evidence="1">Probable DNA-directed RNA polymerase subunit delta</fullName>
    </recommendedName>
    <alternativeName>
        <fullName evidence="1">RNAP delta factor</fullName>
    </alternativeName>
</protein>
<sequence>MKIQDYTKEMVDEKSFIDMAYTLLNDKQTTMNLYDIIDEFKSLGGYEYEDIENRIVQFYTDLNTDGRFLNVGENLWGLRDWYSVDDIEEKIAPTIQKFDILDDEDEEDQNLKLLGDDDADEDDDIPAQTDDQETLDESDNDEDDVEMNEADIVIDEDEDEDIAEGEEEAFEDAEDFND</sequence>
<accession>Q8CRM5</accession>
<organism>
    <name type="scientific">Staphylococcus epidermidis (strain ATCC 12228 / FDA PCI 1200)</name>
    <dbReference type="NCBI Taxonomy" id="176280"/>
    <lineage>
        <taxon>Bacteria</taxon>
        <taxon>Bacillati</taxon>
        <taxon>Bacillota</taxon>
        <taxon>Bacilli</taxon>
        <taxon>Bacillales</taxon>
        <taxon>Staphylococcaceae</taxon>
        <taxon>Staphylococcus</taxon>
    </lineage>
</organism>
<comment type="function">
    <text evidence="1">Participates in both the initiation and recycling phases of transcription. In the presence of the delta subunit, RNAP displays an increased specificity of transcription, a decreased affinity for nucleic acids, and an increased efficiency of RNA synthesis because of enhanced recycling.</text>
</comment>
<comment type="subunit">
    <text evidence="1">RNAP is composed of a core of 2 alpha, a beta and a beta' subunits. The core is associated with a delta subunit and one of several sigma factors.</text>
</comment>
<comment type="similarity">
    <text evidence="1">Belongs to the RpoE family.</text>
</comment>
<reference key="1">
    <citation type="journal article" date="2003" name="Mol. Microbiol.">
        <title>Genome-based analysis of virulence genes in a non-biofilm-forming Staphylococcus epidermidis strain (ATCC 12228).</title>
        <authorList>
            <person name="Zhang Y.-Q."/>
            <person name="Ren S.-X."/>
            <person name="Li H.-L."/>
            <person name="Wang Y.-X."/>
            <person name="Fu G."/>
            <person name="Yang J."/>
            <person name="Qin Z.-Q."/>
            <person name="Miao Y.-G."/>
            <person name="Wang W.-Y."/>
            <person name="Chen R.-S."/>
            <person name="Shen Y."/>
            <person name="Chen Z."/>
            <person name="Yuan Z.-H."/>
            <person name="Zhao G.-P."/>
            <person name="Qu D."/>
            <person name="Danchin A."/>
            <person name="Wen Y.-M."/>
        </authorList>
    </citation>
    <scope>NUCLEOTIDE SEQUENCE [LARGE SCALE GENOMIC DNA]</scope>
    <source>
        <strain>ATCC 12228 / FDA PCI 1200</strain>
    </source>
</reference>